<feature type="chain" id="PRO_0000144764" description="Claudin-11">
    <location>
        <begin position="1"/>
        <end position="207"/>
    </location>
</feature>
<feature type="topological domain" description="Cytoplasmic" evidence="3">
    <location>
        <position position="1"/>
    </location>
</feature>
<feature type="transmembrane region" description="Helical" evidence="3">
    <location>
        <begin position="2"/>
        <end position="22"/>
    </location>
</feature>
<feature type="topological domain" description="Extracellular" evidence="3">
    <location>
        <begin position="23"/>
        <end position="82"/>
    </location>
</feature>
<feature type="transmembrane region" description="Helical" evidence="3">
    <location>
        <begin position="83"/>
        <end position="103"/>
    </location>
</feature>
<feature type="topological domain" description="Cytoplasmic" evidence="3">
    <location>
        <begin position="104"/>
        <end position="122"/>
    </location>
</feature>
<feature type="transmembrane region" description="Helical" evidence="3">
    <location>
        <begin position="123"/>
        <end position="143"/>
    </location>
</feature>
<feature type="topological domain" description="Extracellular" evidence="3">
    <location>
        <begin position="144"/>
        <end position="157"/>
    </location>
</feature>
<feature type="transmembrane region" description="Helical" evidence="3">
    <location>
        <begin position="158"/>
        <end position="178"/>
    </location>
</feature>
<feature type="topological domain" description="Cytoplasmic" evidence="3">
    <location>
        <begin position="179"/>
        <end position="207"/>
    </location>
</feature>
<feature type="modified residue" description="Phosphoserine" evidence="5">
    <location>
        <position position="193"/>
    </location>
</feature>
<feature type="modified residue" description="Phosphoserine" evidence="5">
    <location>
        <position position="194"/>
    </location>
</feature>
<feature type="modified residue" description="Phosphoserine" evidence="5">
    <location>
        <position position="197"/>
    </location>
</feature>
<feature type="modified residue" description="Phosphoserine" evidence="5">
    <location>
        <position position="198"/>
    </location>
</feature>
<sequence length="207" mass="22046">MVATCLQVVGFVTSFVGWIGIIVTTSTNDWVVTCSYTIPTCRKMDELGSKGLWADCVMATGLHHCKPLVDILILPGYAQACRALMIAASVLGLPGILLLLTVLPCIRMGHEPGVAKYRRAQLAGVLLILLALCAIVATIWFPVCAHREITIVSFGYSLYAGWIGAVMCLVGGCVIVCCSGDAQSFGENRFYYSSGSSSPTHAKSAHV</sequence>
<reference key="1">
    <citation type="journal article" date="2001" name="Endocrinology">
        <title>Transforming growth factor-beta3 perturbs the inter-Sertoli tight junction permeability barrier in vitro possibly mediated via its effects on occludin, zonula occludens-1, and claudin-11.</title>
        <authorList>
            <person name="Lui W.Y."/>
            <person name="Lee W.M."/>
            <person name="Cheng C.Y."/>
        </authorList>
    </citation>
    <scope>NUCLEOTIDE SEQUENCE [MRNA]</scope>
</reference>
<reference key="2">
    <citation type="submission" date="2007-09" db="UniProtKB">
        <authorList>
            <person name="Lubec G."/>
            <person name="Kang S.U."/>
            <person name="Lubec S."/>
        </authorList>
    </citation>
    <scope>PROTEIN SEQUENCE OF 44-50 AND 190-203</scope>
    <scope>IDENTIFICATION BY MASS SPECTROMETRY</scope>
    <source>
        <strain>Sprague-Dawley</strain>
        <tissue>Brain</tissue>
    </source>
</reference>
<reference key="3">
    <citation type="journal article" date="2012" name="Nat. Commun.">
        <title>Quantitative maps of protein phosphorylation sites across 14 different rat organs and tissues.</title>
        <authorList>
            <person name="Lundby A."/>
            <person name="Secher A."/>
            <person name="Lage K."/>
            <person name="Nordsborg N.B."/>
            <person name="Dmytriyev A."/>
            <person name="Lundby C."/>
            <person name="Olsen J.V."/>
        </authorList>
    </citation>
    <scope>PHOSPHORYLATION [LARGE SCALE ANALYSIS] AT SER-193; SER-194; SER-197 AND SER-198</scope>
    <scope>IDENTIFICATION BY MASS SPECTROMETRY [LARGE SCALE ANALYSIS]</scope>
</reference>
<organism>
    <name type="scientific">Rattus norvegicus</name>
    <name type="common">Rat</name>
    <dbReference type="NCBI Taxonomy" id="10116"/>
    <lineage>
        <taxon>Eukaryota</taxon>
        <taxon>Metazoa</taxon>
        <taxon>Chordata</taxon>
        <taxon>Craniata</taxon>
        <taxon>Vertebrata</taxon>
        <taxon>Euteleostomi</taxon>
        <taxon>Mammalia</taxon>
        <taxon>Eutheria</taxon>
        <taxon>Euarchontoglires</taxon>
        <taxon>Glires</taxon>
        <taxon>Rodentia</taxon>
        <taxon>Myomorpha</taxon>
        <taxon>Muroidea</taxon>
        <taxon>Muridae</taxon>
        <taxon>Murinae</taxon>
        <taxon>Rattus</taxon>
    </lineage>
</organism>
<gene>
    <name type="primary">Cldn11</name>
</gene>
<protein>
    <recommendedName>
        <fullName>Claudin-11</fullName>
    </recommendedName>
</protein>
<comment type="function">
    <text evidence="1">Plays a major role in tight junction-specific obliteration of the intercellular space, through calcium-independent cell-adhesion activity.</text>
</comment>
<comment type="subunit">
    <text evidence="1 2">Interacts with tetraspanin-3/TSPAN3. Interacts with OCLN.</text>
</comment>
<comment type="subcellular location">
    <subcellularLocation>
        <location evidence="1">Cell junction</location>
        <location evidence="1">Tight junction</location>
    </subcellularLocation>
    <subcellularLocation>
        <location evidence="1">Cell membrane</location>
        <topology evidence="3">Multi-pass membrane protein</topology>
    </subcellularLocation>
</comment>
<comment type="similarity">
    <text evidence="4">Belongs to the claudin family.</text>
</comment>
<proteinExistence type="evidence at protein level"/>
<accession>Q99P82</accession>
<evidence type="ECO:0000250" key="1">
    <source>
        <dbReference type="UniProtKB" id="O75508"/>
    </source>
</evidence>
<evidence type="ECO:0000250" key="2">
    <source>
        <dbReference type="UniProtKB" id="Q60771"/>
    </source>
</evidence>
<evidence type="ECO:0000255" key="3"/>
<evidence type="ECO:0000305" key="4"/>
<evidence type="ECO:0007744" key="5">
    <source>
    </source>
</evidence>
<name>CLD11_RAT</name>
<keyword id="KW-0965">Cell junction</keyword>
<keyword id="KW-1003">Cell membrane</keyword>
<keyword id="KW-0903">Direct protein sequencing</keyword>
<keyword id="KW-0472">Membrane</keyword>
<keyword id="KW-0597">Phosphoprotein</keyword>
<keyword id="KW-1185">Reference proteome</keyword>
<keyword id="KW-0796">Tight junction</keyword>
<keyword id="KW-0812">Transmembrane</keyword>
<keyword id="KW-1133">Transmembrane helix</keyword>
<dbReference type="EMBL" id="AF324043">
    <property type="protein sequence ID" value="AAG50277.1"/>
    <property type="molecule type" value="mRNA"/>
</dbReference>
<dbReference type="SMR" id="Q99P82"/>
<dbReference type="FunCoup" id="Q99P82">
    <property type="interactions" value="288"/>
</dbReference>
<dbReference type="IntAct" id="Q99P82">
    <property type="interactions" value="1"/>
</dbReference>
<dbReference type="MINT" id="Q99P82"/>
<dbReference type="STRING" id="10116.ENSRNOP00000014359"/>
<dbReference type="iPTMnet" id="Q99P82"/>
<dbReference type="PhosphoSitePlus" id="Q99P82"/>
<dbReference type="PaxDb" id="10116-ENSRNOP00000014359"/>
<dbReference type="UCSC" id="RGD:71081">
    <property type="organism name" value="rat"/>
</dbReference>
<dbReference type="AGR" id="RGD:71081"/>
<dbReference type="RGD" id="71081">
    <property type="gene designation" value="Cldn11"/>
</dbReference>
<dbReference type="eggNOG" id="ENOG502QSDJ">
    <property type="taxonomic scope" value="Eukaryota"/>
</dbReference>
<dbReference type="InParanoid" id="Q99P82"/>
<dbReference type="PhylomeDB" id="Q99P82"/>
<dbReference type="PRO" id="PR:Q99P82"/>
<dbReference type="Proteomes" id="UP000002494">
    <property type="component" value="Unplaced"/>
</dbReference>
<dbReference type="GO" id="GO:0030424">
    <property type="term" value="C:axon"/>
    <property type="evidence" value="ECO:0000266"/>
    <property type="project" value="RGD"/>
</dbReference>
<dbReference type="GO" id="GO:0045178">
    <property type="term" value="C:basal part of cell"/>
    <property type="evidence" value="ECO:0000266"/>
    <property type="project" value="RGD"/>
</dbReference>
<dbReference type="GO" id="GO:0005923">
    <property type="term" value="C:bicellular tight junction"/>
    <property type="evidence" value="ECO:0000250"/>
    <property type="project" value="UniProtKB"/>
</dbReference>
<dbReference type="GO" id="GO:0005883">
    <property type="term" value="C:neurofilament"/>
    <property type="evidence" value="ECO:0000266"/>
    <property type="project" value="RGD"/>
</dbReference>
<dbReference type="GO" id="GO:0005886">
    <property type="term" value="C:plasma membrane"/>
    <property type="evidence" value="ECO:0000266"/>
    <property type="project" value="RGD"/>
</dbReference>
<dbReference type="GO" id="GO:0070160">
    <property type="term" value="C:tight junction"/>
    <property type="evidence" value="ECO:0000266"/>
    <property type="project" value="RGD"/>
</dbReference>
<dbReference type="GO" id="GO:0042802">
    <property type="term" value="F:identical protein binding"/>
    <property type="evidence" value="ECO:0000250"/>
    <property type="project" value="UniProtKB"/>
</dbReference>
<dbReference type="GO" id="GO:0005198">
    <property type="term" value="F:structural molecule activity"/>
    <property type="evidence" value="ECO:0007669"/>
    <property type="project" value="InterPro"/>
</dbReference>
<dbReference type="GO" id="GO:0008366">
    <property type="term" value="P:axon ensheathment"/>
    <property type="evidence" value="ECO:0000266"/>
    <property type="project" value="RGD"/>
</dbReference>
<dbReference type="GO" id="GO:0070830">
    <property type="term" value="P:bicellular tight junction assembly"/>
    <property type="evidence" value="ECO:0000318"/>
    <property type="project" value="GO_Central"/>
</dbReference>
<dbReference type="GO" id="GO:0016338">
    <property type="term" value="P:calcium-independent cell-cell adhesion via plasma membrane cell-adhesion molecules"/>
    <property type="evidence" value="ECO:0000250"/>
    <property type="project" value="UniProtKB"/>
</dbReference>
<dbReference type="GO" id="GO:0007155">
    <property type="term" value="P:cell adhesion"/>
    <property type="evidence" value="ECO:0000266"/>
    <property type="project" value="RGD"/>
</dbReference>
<dbReference type="GO" id="GO:0007283">
    <property type="term" value="P:spermatogenesis"/>
    <property type="evidence" value="ECO:0000266"/>
    <property type="project" value="RGD"/>
</dbReference>
<dbReference type="GO" id="GO:0120192">
    <property type="term" value="P:tight junction assembly"/>
    <property type="evidence" value="ECO:0000266"/>
    <property type="project" value="RGD"/>
</dbReference>
<dbReference type="FunFam" id="1.20.140.150:FF:000015">
    <property type="entry name" value="Claudin"/>
    <property type="match status" value="1"/>
</dbReference>
<dbReference type="Gene3D" id="1.20.140.150">
    <property type="match status" value="1"/>
</dbReference>
<dbReference type="InterPro" id="IPR006187">
    <property type="entry name" value="Claudin"/>
</dbReference>
<dbReference type="InterPro" id="IPR003555">
    <property type="entry name" value="Claudin11"/>
</dbReference>
<dbReference type="InterPro" id="IPR017974">
    <property type="entry name" value="Claudin_CS"/>
</dbReference>
<dbReference type="InterPro" id="IPR004031">
    <property type="entry name" value="PMP22/EMP/MP20/Claudin"/>
</dbReference>
<dbReference type="PANTHER" id="PTHR12002">
    <property type="entry name" value="CLAUDIN"/>
    <property type="match status" value="1"/>
</dbReference>
<dbReference type="Pfam" id="PF00822">
    <property type="entry name" value="PMP22_Claudin"/>
    <property type="match status" value="1"/>
</dbReference>
<dbReference type="PRINTS" id="PR01077">
    <property type="entry name" value="CLAUDIN"/>
</dbReference>
<dbReference type="PRINTS" id="PR01384">
    <property type="entry name" value="CLAUDIN11"/>
</dbReference>
<dbReference type="PROSITE" id="PS01346">
    <property type="entry name" value="CLAUDIN"/>
    <property type="match status" value="1"/>
</dbReference>